<gene>
    <name evidence="13" type="primary">POLR3GL</name>
</gene>
<name>RPC7L_HUMAN</name>
<keyword id="KW-0002">3D-structure</keyword>
<keyword id="KW-0225">Disease variant</keyword>
<keyword id="KW-0242">Dwarfism</keyword>
<keyword id="KW-0539">Nucleus</keyword>
<keyword id="KW-1267">Proteomics identification</keyword>
<keyword id="KW-1185">Reference proteome</keyword>
<organism>
    <name type="scientific">Homo sapiens</name>
    <name type="common">Human</name>
    <dbReference type="NCBI Taxonomy" id="9606"/>
    <lineage>
        <taxon>Eukaryota</taxon>
        <taxon>Metazoa</taxon>
        <taxon>Chordata</taxon>
        <taxon>Craniata</taxon>
        <taxon>Vertebrata</taxon>
        <taxon>Euteleostomi</taxon>
        <taxon>Mammalia</taxon>
        <taxon>Eutheria</taxon>
        <taxon>Euarchontoglires</taxon>
        <taxon>Primates</taxon>
        <taxon>Haplorrhini</taxon>
        <taxon>Catarrhini</taxon>
        <taxon>Hominidae</taxon>
        <taxon>Homo</taxon>
    </lineage>
</organism>
<feature type="chain" id="PRO_0000311590" description="DNA-directed RNA polymerase III subunit RPC7-like">
    <location>
        <begin position="1"/>
        <end position="218"/>
    </location>
</feature>
<feature type="region of interest" description="Disordered" evidence="2">
    <location>
        <begin position="133"/>
        <end position="218"/>
    </location>
</feature>
<feature type="compositionally biased region" description="Basic and acidic residues" evidence="2">
    <location>
        <begin position="139"/>
        <end position="160"/>
    </location>
</feature>
<feature type="compositionally biased region" description="Acidic residues" evidence="2">
    <location>
        <begin position="161"/>
        <end position="193"/>
    </location>
</feature>
<feature type="compositionally biased region" description="Acidic residues" evidence="2">
    <location>
        <begin position="201"/>
        <end position="218"/>
    </location>
</feature>
<feature type="sequence variant" id="VAR_085496" description="In SOFM; uncertain significance; decrease in transcript levels, possibly due to nonsense-mediated mRNA decay." evidence="9">
    <location>
        <begin position="120"/>
        <end position="218"/>
    </location>
</feature>
<evidence type="ECO:0000250" key="1"/>
<evidence type="ECO:0000256" key="2">
    <source>
        <dbReference type="SAM" id="MobiDB-lite"/>
    </source>
</evidence>
<evidence type="ECO:0000269" key="3">
    <source>
    </source>
</evidence>
<evidence type="ECO:0000269" key="4">
    <source>
    </source>
</evidence>
<evidence type="ECO:0000269" key="5">
    <source>
    </source>
</evidence>
<evidence type="ECO:0000269" key="6">
    <source>
    </source>
</evidence>
<evidence type="ECO:0000269" key="7">
    <source>
    </source>
</evidence>
<evidence type="ECO:0000269" key="8">
    <source>
    </source>
</evidence>
<evidence type="ECO:0000269" key="9">
    <source>
    </source>
</evidence>
<evidence type="ECO:0000269" key="10">
    <source>
    </source>
</evidence>
<evidence type="ECO:0000303" key="11">
    <source>
    </source>
</evidence>
<evidence type="ECO:0000305" key="12"/>
<evidence type="ECO:0000312" key="13">
    <source>
        <dbReference type="HGNC" id="HGNC:28466"/>
    </source>
</evidence>
<comment type="function">
    <text evidence="3 10">DNA-dependent RNA polymerase catalyzes the transcription of DNA into RNA using the four ribonucleoside triphosphates as substrates. Specific peripheric component of RNA polymerase III which synthesizes small RNAs, such as 5S rRNA and tRNAs.</text>
</comment>
<comment type="subunit">
    <text evidence="1 4 5 6 10">Component of the RNA polymerase III (Pol III) complex consisting of 17 subunits (By similarity). Pol III exists as two alternative complexes defined by the mutually exclusive incorporation of subunit POLR3G/RPC7alpha or POLR3GL/RPC7beta (PubMed:35637192). Found in a trimeric complex with POLR3C/RPC3 and POLR3F/RPC6 (PubMed:24107381). Directly interacts with POLR3C (PubMed:21358628, PubMed:24107381, PubMed:26394183).</text>
</comment>
<comment type="interaction">
    <interactant intactId="EBI-2855862">
        <id>Q9BT43</id>
    </interactant>
    <interactant intactId="EBI-10181188">
        <id>Q8N7W2-2</id>
        <label>BEND7</label>
    </interactant>
    <organismsDiffer>false</organismsDiffer>
    <experiments>3</experiments>
</comment>
<comment type="interaction">
    <interactant intactId="EBI-2855862">
        <id>Q9BT43</id>
    </interactant>
    <interactant intactId="EBI-375013">
        <id>P30281</id>
        <label>CCND3</label>
    </interactant>
    <organismsDiffer>false</organismsDiffer>
    <experiments>9</experiments>
</comment>
<comment type="interaction">
    <interactant intactId="EBI-2855862">
        <id>Q9BT43</id>
    </interactant>
    <interactant intactId="EBI-8639312">
        <id>P25800</id>
        <label>LMO1</label>
    </interactant>
    <organismsDiffer>false</organismsDiffer>
    <experiments>3</experiments>
</comment>
<comment type="interaction">
    <interactant intactId="EBI-2855862">
        <id>Q9BT43</id>
    </interactant>
    <interactant intactId="EBI-748182">
        <id>Q8TC57</id>
        <label>M1AP</label>
    </interactant>
    <organismsDiffer>false</organismsDiffer>
    <experiments>3</experiments>
</comment>
<comment type="interaction">
    <interactant intactId="EBI-2855862">
        <id>Q9BT43</id>
    </interactant>
    <interactant intactId="EBI-2864512">
        <id>P50221</id>
        <label>MEOX1</label>
    </interactant>
    <organismsDiffer>false</organismsDiffer>
    <experiments>3</experiments>
</comment>
<comment type="interaction">
    <interactant intactId="EBI-2855862">
        <id>Q9BT43</id>
    </interactant>
    <interactant intactId="EBI-16439278">
        <id>Q6FHY5</id>
        <label>MEOX2</label>
    </interactant>
    <organismsDiffer>false</organismsDiffer>
    <experiments>3</experiments>
</comment>
<comment type="interaction">
    <interactant intactId="EBI-2855862">
        <id>Q9BT43</id>
    </interactant>
    <interactant intactId="EBI-747278">
        <id>P26367</id>
        <label>PAX6</label>
    </interactant>
    <organismsDiffer>false</organismsDiffer>
    <experiments>3</experiments>
</comment>
<comment type="interaction">
    <interactant intactId="EBI-2855862">
        <id>Q9BT43</id>
    </interactant>
    <interactant intactId="EBI-5452779">
        <id>Q9BUI4</id>
        <label>POLR3C</label>
    </interactant>
    <organismsDiffer>false</organismsDiffer>
    <experiments>10</experiments>
</comment>
<comment type="interaction">
    <interactant intactId="EBI-2855862">
        <id>Q9BT43</id>
    </interactant>
    <interactant intactId="EBI-710067">
        <id>Q9H1D9</id>
        <label>POLR3F</label>
    </interactant>
    <organismsDiffer>false</organismsDiffer>
    <experiments>8</experiments>
</comment>
<comment type="interaction">
    <interactant intactId="EBI-2855862">
        <id>Q9BT43</id>
    </interactant>
    <interactant intactId="EBI-717422">
        <id>Q12800</id>
        <label>TFCP2</label>
    </interactant>
    <organismsDiffer>false</organismsDiffer>
    <experiments>3</experiments>
</comment>
<comment type="interaction">
    <interactant intactId="EBI-2855862">
        <id>Q9BT43</id>
    </interactant>
    <interactant intactId="EBI-12111538">
        <id>Q8IY57-5</id>
        <label>YAF2</label>
    </interactant>
    <organismsDiffer>false</organismsDiffer>
    <experiments>3</experiments>
</comment>
<comment type="subcellular location">
    <subcellularLocation>
        <location evidence="3">Nucleus</location>
    </subcellularLocation>
</comment>
<comment type="tissue specificity">
    <text evidence="3 10">Widely expressed. Expressed in CD4-positive T cells.</text>
</comment>
<comment type="developmental stage">
    <text evidence="3 5 7">Up-regulated in embryonic stem cells upon retinoic acid-induced differentiation into embroid bodies (at protein level) (PubMed:28494942). No significant changes in mRNA levels between dividing and non-dividing cells, although levels tends to be slightly higher in non-dividing cells (PubMed:20154270, PubMed:24107381).</text>
</comment>
<comment type="disease" evidence="8 9">
    <disease id="DI-06060">
        <name>Short stature, oligodontia, dysmorphic facies, and motor delay</name>
        <acronym>SOFM</acronym>
        <description>An autosomal recessive disorder with phenotypic variability. The main clinical features include endosteal hyperostosis, short stature, oligodontia, mild facial dysmorphisms, and delayed motor development. Some patients show progeroid features.</description>
        <dbReference type="MIM" id="619234"/>
    </disease>
    <text>The disease may be caused by variants affecting the gene represented in this entry.</text>
</comment>
<comment type="similarity">
    <text evidence="12">Belongs to the eukaryotic RPC7 RNA polymerase subunit family.</text>
</comment>
<protein>
    <recommendedName>
        <fullName>DNA-directed RNA polymerase III subunit RPC7-like</fullName>
        <shortName>RNA polymerase III subunit C7-like</shortName>
    </recommendedName>
    <alternativeName>
        <fullName>DNA-directed RNA polymerase III subunit G-like</fullName>
    </alternativeName>
    <alternativeName>
        <fullName>RNA polymerase III 32 kDa beta subunit</fullName>
        <shortName evidence="11">RPC32-beta</shortName>
    </alternativeName>
</protein>
<sequence>MASRGGGRGRGRGQLTFNVEAVGIGKGDALPPPTLQPSPLFPPLEFRPVPLPSGEEGEYVLALKQELRGAMRQLPYFIRPAVPKRDVERYSDKYQMSGPIDNAIDWNPDWRRLPRELKIRVRKLQKERITILLPKRPPKTTEDKEETIQKLETLEKKEEEVTSEEDEEKEEEEEKEEEEEEEYDEEEHEEETDYIMSYFDNGEDFGGDSDDNMDEAIY</sequence>
<dbReference type="EMBL" id="DQ418461">
    <property type="protein sequence ID" value="ABD76394.1"/>
    <property type="molecule type" value="mRNA"/>
</dbReference>
<dbReference type="EMBL" id="AK056984">
    <property type="protein sequence ID" value="BAB71332.1"/>
    <property type="molecule type" value="mRNA"/>
</dbReference>
<dbReference type="EMBL" id="BC004355">
    <property type="protein sequence ID" value="AAH04355.1"/>
    <property type="molecule type" value="mRNA"/>
</dbReference>
<dbReference type="CCDS" id="CCDS72875.1"/>
<dbReference type="RefSeq" id="NP_001317614.1">
    <property type="nucleotide sequence ID" value="NM_001330685.1"/>
</dbReference>
<dbReference type="RefSeq" id="NP_115681.1">
    <property type="nucleotide sequence ID" value="NM_032305.3"/>
</dbReference>
<dbReference type="RefSeq" id="XP_005277488.1">
    <property type="nucleotide sequence ID" value="XM_005277431.4"/>
</dbReference>
<dbReference type="PDB" id="5AFQ">
    <property type="method" value="X-ray"/>
    <property type="resolution" value="7.00 A"/>
    <property type="chains" value="D/E=50-134"/>
</dbReference>
<dbReference type="PDBsum" id="5AFQ"/>
<dbReference type="SMR" id="Q9BT43"/>
<dbReference type="BioGRID" id="123992">
    <property type="interactions" value="39"/>
</dbReference>
<dbReference type="ComplexPortal" id="CPX-7482">
    <property type="entry name" value="DNA-directed RNA polymerase III complex, POLR3GL variant"/>
</dbReference>
<dbReference type="DIP" id="DIP-59080N"/>
<dbReference type="FunCoup" id="Q9BT43">
    <property type="interactions" value="1967"/>
</dbReference>
<dbReference type="IntAct" id="Q9BT43">
    <property type="interactions" value="39"/>
</dbReference>
<dbReference type="MINT" id="Q9BT43"/>
<dbReference type="STRING" id="9606.ENSP00000358320"/>
<dbReference type="iPTMnet" id="Q9BT43"/>
<dbReference type="PhosphoSitePlus" id="Q9BT43"/>
<dbReference type="BioMuta" id="POLR3GL"/>
<dbReference type="DMDM" id="74733087"/>
<dbReference type="jPOST" id="Q9BT43"/>
<dbReference type="MassIVE" id="Q9BT43"/>
<dbReference type="PaxDb" id="9606-ENSP00000358320"/>
<dbReference type="PeptideAtlas" id="Q9BT43"/>
<dbReference type="ProteomicsDB" id="78950"/>
<dbReference type="Pumba" id="Q9BT43"/>
<dbReference type="Antibodypedia" id="33956">
    <property type="antibodies" value="162 antibodies from 16 providers"/>
</dbReference>
<dbReference type="DNASU" id="84265"/>
<dbReference type="Ensembl" id="ENST00000369314.2">
    <property type="protein sequence ID" value="ENSP00000358320.1"/>
    <property type="gene ID" value="ENSG00000121851.13"/>
</dbReference>
<dbReference type="GeneID" id="84265"/>
<dbReference type="KEGG" id="hsa:84265"/>
<dbReference type="MANE-Select" id="ENST00000369314.2">
    <property type="protein sequence ID" value="ENSP00000358320.1"/>
    <property type="RefSeq nucleotide sequence ID" value="NM_032305.3"/>
    <property type="RefSeq protein sequence ID" value="NP_115681.1"/>
</dbReference>
<dbReference type="UCSC" id="uc001enp.1">
    <property type="organism name" value="human"/>
</dbReference>
<dbReference type="AGR" id="HGNC:28466"/>
<dbReference type="CTD" id="84265"/>
<dbReference type="DisGeNET" id="84265"/>
<dbReference type="GeneCards" id="POLR3GL"/>
<dbReference type="HGNC" id="HGNC:28466">
    <property type="gene designation" value="POLR3GL"/>
</dbReference>
<dbReference type="HPA" id="ENSG00000121851">
    <property type="expression patterns" value="Low tissue specificity"/>
</dbReference>
<dbReference type="MalaCards" id="POLR3GL"/>
<dbReference type="MIM" id="617457">
    <property type="type" value="gene"/>
</dbReference>
<dbReference type="MIM" id="619234">
    <property type="type" value="phenotype"/>
</dbReference>
<dbReference type="neXtProt" id="NX_Q9BT43"/>
<dbReference type="PharmGKB" id="PA134921690"/>
<dbReference type="VEuPathDB" id="HostDB:ENSG00000121851"/>
<dbReference type="eggNOG" id="ENOG502QUPX">
    <property type="taxonomic scope" value="Eukaryota"/>
</dbReference>
<dbReference type="GeneTree" id="ENSGT01060000248645"/>
<dbReference type="InParanoid" id="Q9BT43"/>
<dbReference type="OMA" id="KDLHAPF"/>
<dbReference type="OrthoDB" id="5377312at2759"/>
<dbReference type="PAN-GO" id="Q9BT43">
    <property type="GO annotations" value="1 GO annotation based on evolutionary models"/>
</dbReference>
<dbReference type="PhylomeDB" id="Q9BT43"/>
<dbReference type="TreeFam" id="TF103052"/>
<dbReference type="PathwayCommons" id="Q9BT43"/>
<dbReference type="Reactome" id="R-HSA-1834949">
    <property type="pathway name" value="Cytosolic sensors of pathogen-associated DNA"/>
</dbReference>
<dbReference type="Reactome" id="R-HSA-73780">
    <property type="pathway name" value="RNA Polymerase III Chain Elongation"/>
</dbReference>
<dbReference type="Reactome" id="R-HSA-73980">
    <property type="pathway name" value="RNA Polymerase III Transcription Termination"/>
</dbReference>
<dbReference type="Reactome" id="R-HSA-749476">
    <property type="pathway name" value="RNA Polymerase III Abortive And Retractive Initiation"/>
</dbReference>
<dbReference type="Reactome" id="R-HSA-76061">
    <property type="pathway name" value="RNA Polymerase III Transcription Initiation From Type 1 Promoter"/>
</dbReference>
<dbReference type="Reactome" id="R-HSA-76066">
    <property type="pathway name" value="RNA Polymerase III Transcription Initiation From Type 2 Promoter"/>
</dbReference>
<dbReference type="Reactome" id="R-HSA-76071">
    <property type="pathway name" value="RNA Polymerase III Transcription Initiation From Type 3 Promoter"/>
</dbReference>
<dbReference type="SignaLink" id="Q9BT43"/>
<dbReference type="BioGRID-ORCS" id="84265">
    <property type="hits" value="14 hits in 1156 CRISPR screens"/>
</dbReference>
<dbReference type="ChiTaRS" id="POLR3GL">
    <property type="organism name" value="human"/>
</dbReference>
<dbReference type="GenomeRNAi" id="84265"/>
<dbReference type="Pharos" id="Q9BT43">
    <property type="development level" value="Tbio"/>
</dbReference>
<dbReference type="PRO" id="PR:Q9BT43"/>
<dbReference type="Proteomes" id="UP000005640">
    <property type="component" value="Chromosome 1"/>
</dbReference>
<dbReference type="RNAct" id="Q9BT43">
    <property type="molecule type" value="protein"/>
</dbReference>
<dbReference type="Bgee" id="ENSG00000121851">
    <property type="expression patterns" value="Expressed in gastrocnemius and 99 other cell types or tissues"/>
</dbReference>
<dbReference type="ExpressionAtlas" id="Q9BT43">
    <property type="expression patterns" value="baseline and differential"/>
</dbReference>
<dbReference type="GO" id="GO:0005829">
    <property type="term" value="C:cytosol"/>
    <property type="evidence" value="ECO:0000304"/>
    <property type="project" value="Reactome"/>
</dbReference>
<dbReference type="GO" id="GO:0005654">
    <property type="term" value="C:nucleoplasm"/>
    <property type="evidence" value="ECO:0000304"/>
    <property type="project" value="Reactome"/>
</dbReference>
<dbReference type="GO" id="GO:0005634">
    <property type="term" value="C:nucleus"/>
    <property type="evidence" value="ECO:0000314"/>
    <property type="project" value="UniProtKB"/>
</dbReference>
<dbReference type="GO" id="GO:0005666">
    <property type="term" value="C:RNA polymerase III complex"/>
    <property type="evidence" value="ECO:0000314"/>
    <property type="project" value="MGI"/>
</dbReference>
<dbReference type="GO" id="GO:0006383">
    <property type="term" value="P:transcription by RNA polymerase III"/>
    <property type="evidence" value="ECO:0000314"/>
    <property type="project" value="UniProtKB"/>
</dbReference>
<dbReference type="InterPro" id="IPR024661">
    <property type="entry name" value="RNA_pol_III_Rpc31"/>
</dbReference>
<dbReference type="PANTHER" id="PTHR15367">
    <property type="entry name" value="DNA-DIRECTED RNA POLYMERASE III"/>
    <property type="match status" value="1"/>
</dbReference>
<dbReference type="PANTHER" id="PTHR15367:SF4">
    <property type="entry name" value="DNA-DIRECTED RNA POLYMERASE III SUBUNIT RPC7-LIKE"/>
    <property type="match status" value="1"/>
</dbReference>
<dbReference type="Pfam" id="PF11705">
    <property type="entry name" value="RNA_pol_3_Rpc31"/>
    <property type="match status" value="1"/>
</dbReference>
<dbReference type="PIRSF" id="PIRSF000777">
    <property type="entry name" value="RNA_polIII_C31"/>
    <property type="match status" value="1"/>
</dbReference>
<accession>Q9BT43</accession>
<accession>B1MVG5</accession>
<reference key="1">
    <citation type="journal article" date="2010" name="Proc. Natl. Acad. Sci. U.S.A.">
        <title>Two isoforms of human RNA polymerase III with specific functions in cell growth and transformation.</title>
        <authorList>
            <person name="Haurie V."/>
            <person name="Durrieu-Gaillard S."/>
            <person name="Dumay-Odelot H."/>
            <person name="Da Silva D."/>
            <person name="Rey C."/>
            <person name="Prochazkova M."/>
            <person name="Roeder R.G."/>
            <person name="Besser D."/>
            <person name="Teichmann M."/>
        </authorList>
    </citation>
    <scope>NUCLEOTIDE SEQUENCE [MRNA]</scope>
    <scope>FUNCTION</scope>
    <scope>SUBCELLULAR LOCATION</scope>
    <scope>DEVELOPMENTAL STAGE</scope>
</reference>
<reference key="2">
    <citation type="journal article" date="2004" name="Nat. Genet.">
        <title>Complete sequencing and characterization of 21,243 full-length human cDNAs.</title>
        <authorList>
            <person name="Ota T."/>
            <person name="Suzuki Y."/>
            <person name="Nishikawa T."/>
            <person name="Otsuki T."/>
            <person name="Sugiyama T."/>
            <person name="Irie R."/>
            <person name="Wakamatsu A."/>
            <person name="Hayashi K."/>
            <person name="Sato H."/>
            <person name="Nagai K."/>
            <person name="Kimura K."/>
            <person name="Makita H."/>
            <person name="Sekine M."/>
            <person name="Obayashi M."/>
            <person name="Nishi T."/>
            <person name="Shibahara T."/>
            <person name="Tanaka T."/>
            <person name="Ishii S."/>
            <person name="Yamamoto J."/>
            <person name="Saito K."/>
            <person name="Kawai Y."/>
            <person name="Isono Y."/>
            <person name="Nakamura Y."/>
            <person name="Nagahari K."/>
            <person name="Murakami K."/>
            <person name="Yasuda T."/>
            <person name="Iwayanagi T."/>
            <person name="Wagatsuma M."/>
            <person name="Shiratori A."/>
            <person name="Sudo H."/>
            <person name="Hosoiri T."/>
            <person name="Kaku Y."/>
            <person name="Kodaira H."/>
            <person name="Kondo H."/>
            <person name="Sugawara M."/>
            <person name="Takahashi M."/>
            <person name="Kanda K."/>
            <person name="Yokoi T."/>
            <person name="Furuya T."/>
            <person name="Kikkawa E."/>
            <person name="Omura Y."/>
            <person name="Abe K."/>
            <person name="Kamihara K."/>
            <person name="Katsuta N."/>
            <person name="Sato K."/>
            <person name="Tanikawa M."/>
            <person name="Yamazaki M."/>
            <person name="Ninomiya K."/>
            <person name="Ishibashi T."/>
            <person name="Yamashita H."/>
            <person name="Murakawa K."/>
            <person name="Fujimori K."/>
            <person name="Tanai H."/>
            <person name="Kimata M."/>
            <person name="Watanabe M."/>
            <person name="Hiraoka S."/>
            <person name="Chiba Y."/>
            <person name="Ishida S."/>
            <person name="Ono Y."/>
            <person name="Takiguchi S."/>
            <person name="Watanabe S."/>
            <person name="Yosida M."/>
            <person name="Hotuta T."/>
            <person name="Kusano J."/>
            <person name="Kanehori K."/>
            <person name="Takahashi-Fujii A."/>
            <person name="Hara H."/>
            <person name="Tanase T.-O."/>
            <person name="Nomura Y."/>
            <person name="Togiya S."/>
            <person name="Komai F."/>
            <person name="Hara R."/>
            <person name="Takeuchi K."/>
            <person name="Arita M."/>
            <person name="Imose N."/>
            <person name="Musashino K."/>
            <person name="Yuuki H."/>
            <person name="Oshima A."/>
            <person name="Sasaki N."/>
            <person name="Aotsuka S."/>
            <person name="Yoshikawa Y."/>
            <person name="Matsunawa H."/>
            <person name="Ichihara T."/>
            <person name="Shiohata N."/>
            <person name="Sano S."/>
            <person name="Moriya S."/>
            <person name="Momiyama H."/>
            <person name="Satoh N."/>
            <person name="Takami S."/>
            <person name="Terashima Y."/>
            <person name="Suzuki O."/>
            <person name="Nakagawa S."/>
            <person name="Senoh A."/>
            <person name="Mizoguchi H."/>
            <person name="Goto Y."/>
            <person name="Shimizu F."/>
            <person name="Wakebe H."/>
            <person name="Hishigaki H."/>
            <person name="Watanabe T."/>
            <person name="Sugiyama A."/>
            <person name="Takemoto M."/>
            <person name="Kawakami B."/>
            <person name="Yamazaki M."/>
            <person name="Watanabe K."/>
            <person name="Kumagai A."/>
            <person name="Itakura S."/>
            <person name="Fukuzumi Y."/>
            <person name="Fujimori Y."/>
            <person name="Komiyama M."/>
            <person name="Tashiro H."/>
            <person name="Tanigami A."/>
            <person name="Fujiwara T."/>
            <person name="Ono T."/>
            <person name="Yamada K."/>
            <person name="Fujii Y."/>
            <person name="Ozaki K."/>
            <person name="Hirao M."/>
            <person name="Ohmori Y."/>
            <person name="Kawabata A."/>
            <person name="Hikiji T."/>
            <person name="Kobatake N."/>
            <person name="Inagaki H."/>
            <person name="Ikema Y."/>
            <person name="Okamoto S."/>
            <person name="Okitani R."/>
            <person name="Kawakami T."/>
            <person name="Noguchi S."/>
            <person name="Itoh T."/>
            <person name="Shigeta K."/>
            <person name="Senba T."/>
            <person name="Matsumura K."/>
            <person name="Nakajima Y."/>
            <person name="Mizuno T."/>
            <person name="Morinaga M."/>
            <person name="Sasaki M."/>
            <person name="Togashi T."/>
            <person name="Oyama M."/>
            <person name="Hata H."/>
            <person name="Watanabe M."/>
            <person name="Komatsu T."/>
            <person name="Mizushima-Sugano J."/>
            <person name="Satoh T."/>
            <person name="Shirai Y."/>
            <person name="Takahashi Y."/>
            <person name="Nakagawa K."/>
            <person name="Okumura K."/>
            <person name="Nagase T."/>
            <person name="Nomura N."/>
            <person name="Kikuchi H."/>
            <person name="Masuho Y."/>
            <person name="Yamashita R."/>
            <person name="Nakai K."/>
            <person name="Yada T."/>
            <person name="Nakamura Y."/>
            <person name="Ohara O."/>
            <person name="Isogai T."/>
            <person name="Sugano S."/>
        </authorList>
    </citation>
    <scope>NUCLEOTIDE SEQUENCE [LARGE SCALE MRNA]</scope>
    <source>
        <tissue>Skeletal muscle</tissue>
    </source>
</reference>
<reference key="3">
    <citation type="journal article" date="2004" name="Genome Res.">
        <title>The status, quality, and expansion of the NIH full-length cDNA project: the Mammalian Gene Collection (MGC).</title>
        <authorList>
            <consortium name="The MGC Project Team"/>
        </authorList>
    </citation>
    <scope>NUCLEOTIDE SEQUENCE [LARGE SCALE MRNA]</scope>
    <source>
        <tissue>Eye</tissue>
    </source>
</reference>
<reference key="4">
    <citation type="journal article" date="2011" name="BMC Syst. Biol.">
        <title>Initial characterization of the human central proteome.</title>
        <authorList>
            <person name="Burkard T.R."/>
            <person name="Planyavsky M."/>
            <person name="Kaupe I."/>
            <person name="Breitwieser F.P."/>
            <person name="Buerckstuemmer T."/>
            <person name="Bennett K.L."/>
            <person name="Superti-Furga G."/>
            <person name="Colinge J."/>
        </authorList>
    </citation>
    <scope>IDENTIFICATION BY MASS SPECTROMETRY [LARGE SCALE ANALYSIS]</scope>
</reference>
<reference key="5">
    <citation type="journal article" date="2011" name="Nat. Struct. Mol. Biol.">
        <title>Structure-function analysis of hRPC62 provides insights into RNA polymerase III transcription initiation.</title>
        <authorList>
            <person name="Lefevre S."/>
            <person name="Dumay-Odelot H."/>
            <person name="El-Ayoubi L."/>
            <person name="Budd A."/>
            <person name="Legrand P."/>
            <person name="Pinaud N."/>
            <person name="Teichmann M."/>
            <person name="Fribourg S."/>
        </authorList>
    </citation>
    <scope>INTERACTION WITH POLR3C</scope>
</reference>
<reference key="6">
    <citation type="journal article" date="2014" name="Genome Res.">
        <title>Gene duplication and neofunctionalization: POLR3G and POLR3GL.</title>
        <authorList>
            <person name="Renaud M."/>
            <person name="Praz V."/>
            <person name="Vieu E."/>
            <person name="Florens L."/>
            <person name="Washburn M.P."/>
            <person name="l'Hote P."/>
            <person name="Hernandez N."/>
        </authorList>
    </citation>
    <scope>IDENTIFICATION IN RNA POL III SUBCOMPLEXES</scope>
    <scope>DEVELOPMENTAL STAGE</scope>
</reference>
<reference key="7">
    <citation type="journal article" date="2017" name="Stem Cell Reports">
        <title>RNA polymerase III subunit POLR3G regulates specific subsets of polyA(+) and smallRNA transcriptomes and splicing in human pluripotent stem cells.</title>
        <authorList>
            <person name="Lund R.J."/>
            <person name="Rahkonen N."/>
            <person name="Malonzo M."/>
            <person name="Kauko L."/>
            <person name="Emani M.R."/>
            <person name="Kivinen V."/>
            <person name="Naervae E."/>
            <person name="Kemppainen E."/>
            <person name="Laiho A."/>
            <person name="Skottman H."/>
            <person name="Hovatta O."/>
            <person name="Rasool O."/>
            <person name="Nykter M."/>
            <person name="Laehdesmaeki H."/>
            <person name="Lahesmaa R."/>
        </authorList>
    </citation>
    <scope>FUNCTION</scope>
    <scope>TISSUE SPECIFICITY</scope>
</reference>
<reference key="8">
    <citation type="journal article" date="2022" name="Nat. Commun.">
        <title>A cancer-associated RNA polymerase III identity drives robust transcription and expression of snaR-A non-coding RNA.</title>
        <authorList>
            <person name="Van Bortle K."/>
            <person name="Marciano D.P."/>
            <person name="Liu Q."/>
            <person name="Chou T."/>
            <person name="Lipchik A.M."/>
            <person name="Gollapudi S."/>
            <person name="Geller B.S."/>
            <person name="Monte E."/>
            <person name="Kamakaka R.T."/>
            <person name="Snyder M.P."/>
        </authorList>
    </citation>
    <scope>FUNCTION OF POL III</scope>
    <scope>SUBUNIT</scope>
    <scope>TISSUE SPECIFICITY</scope>
</reference>
<reference key="9">
    <citation type="journal article" date="2015" name="J. Struct. Biol.">
        <title>Structural analysis of human RPC32beta-RPC62 complex.</title>
        <authorList>
            <person name="Boissier F."/>
            <person name="Dumay-Odelot H."/>
            <person name="Teichmann M."/>
            <person name="Fribourg S."/>
        </authorList>
    </citation>
    <scope>X-RAY CRYSTALLOGRAPHY (7.00 ANGSTROMS) OF 50-134 IN COMPLEX WITH POLR3C</scope>
</reference>
<reference key="10">
    <citation type="journal article" date="2020" name="Eur. J. Hum. Genet.">
        <title>Biallelic variants in POLR3GL cause endosteal hyperostosis and oligodontia.</title>
        <authorList>
            <person name="Terhal P.A."/>
            <person name="Vlaar J.M."/>
            <person name="Middelkamp S."/>
            <person name="Nievelstein R.A.J."/>
            <person name="Nikkels P.G.J."/>
            <person name="Ross J."/>
            <person name="Creton M."/>
            <person name="Bos J.W."/>
            <person name="Voskuil-Kerkhof E.S.M."/>
            <person name="Cuppen E."/>
            <person name="Knoers N."/>
            <person name="van Gassen K.L.I."/>
        </authorList>
    </citation>
    <scope>INVOLVEMENT IN SOFM</scope>
</reference>
<reference key="11">
    <citation type="journal article" date="2020" name="Eur. J. Hum. Genet.">
        <title>A variant of neonatal progeroid syndrome, or Wiedemann-Rautenstrauch syndrome, is associated with a nonsense variant in POLR3GL.</title>
        <authorList>
            <person name="Beauregard-Lacroix E."/>
            <person name="Salian S."/>
            <person name="Kim H."/>
            <person name="Ehresmann S."/>
            <person name="D'Amours G."/>
            <person name="Gauthier J."/>
            <person name="Saillour V."/>
            <person name="Bernard G."/>
            <person name="Mitchell G.A."/>
            <person name="Soucy J.F."/>
            <person name="Michaud J.L."/>
            <person name="Campeau P.M."/>
        </authorList>
    </citation>
    <scope>INVOLVEMENT IN SOFM</scope>
    <scope>VARIANT SOFM 120-ARG--TYR-218 DEL</scope>
    <scope>CHARACTERIZATION OF VARIANT SOFM 120-ARG--TYR-218 DEL</scope>
</reference>
<proteinExistence type="evidence at protein level"/>